<accession>Q9MTN6</accession>
<organism>
    <name type="scientific">Oenothera elata subsp. hookeri</name>
    <name type="common">Hooker's evening primrose</name>
    <name type="synonym">Oenothera hookeri</name>
    <dbReference type="NCBI Taxonomy" id="85636"/>
    <lineage>
        <taxon>Eukaryota</taxon>
        <taxon>Viridiplantae</taxon>
        <taxon>Streptophyta</taxon>
        <taxon>Embryophyta</taxon>
        <taxon>Tracheophyta</taxon>
        <taxon>Spermatophyta</taxon>
        <taxon>Magnoliopsida</taxon>
        <taxon>eudicotyledons</taxon>
        <taxon>Gunneridae</taxon>
        <taxon>Pentapetalae</taxon>
        <taxon>rosids</taxon>
        <taxon>malvids</taxon>
        <taxon>Myrtales</taxon>
        <taxon>Onagraceae</taxon>
        <taxon>Onagroideae</taxon>
        <taxon>Onagreae</taxon>
        <taxon>Oenothera</taxon>
    </lineage>
</organism>
<evidence type="ECO:0000255" key="1">
    <source>
        <dbReference type="HAMAP-Rule" id="MF_00537"/>
    </source>
</evidence>
<evidence type="ECO:0000305" key="2"/>
<name>RR14_OENEH</name>
<proteinExistence type="inferred from homology"/>
<reference key="1">
    <citation type="journal article" date="2000" name="Mol. Gen. Genet.">
        <title>Complete nucleotide sequence of the Oenothera elata plastid chromosome, representing plastome I of the five distinguishable Euoenothera plastomes.</title>
        <authorList>
            <person name="Hupfer H."/>
            <person name="Swiatek M."/>
            <person name="Hornung S."/>
            <person name="Herrmann R.G."/>
            <person name="Maier R.M."/>
            <person name="Chiu W.-L."/>
            <person name="Sears B."/>
        </authorList>
    </citation>
    <scope>NUCLEOTIDE SEQUENCE [LARGE SCALE GENOMIC DNA]</scope>
    <source>
        <strain>cv. Johansen</strain>
    </source>
</reference>
<reference key="2">
    <citation type="journal article" date="2008" name="Nucleic Acids Res.">
        <title>The complete nucleotide sequences of the five genetically distinct plastid genomes of Oenothera, subsection Oenothera: I. Sequence evaluation and plastome evolution.</title>
        <authorList>
            <person name="Greiner S."/>
            <person name="Wang X."/>
            <person name="Rauwolf U."/>
            <person name="Silber M.V."/>
            <person name="Mayer K."/>
            <person name="Meurer J."/>
            <person name="Haberer G."/>
            <person name="Herrmann R.G."/>
        </authorList>
    </citation>
    <scope>SEQUENCE REVISION TO 71 AND 88</scope>
</reference>
<keyword id="KW-0150">Chloroplast</keyword>
<keyword id="KW-0934">Plastid</keyword>
<keyword id="KW-0687">Ribonucleoprotein</keyword>
<keyword id="KW-0689">Ribosomal protein</keyword>
<keyword id="KW-0694">RNA-binding</keyword>
<keyword id="KW-0699">rRNA-binding</keyword>
<feature type="chain" id="PRO_0000276690" description="Small ribosomal subunit protein uS14c">
    <location>
        <begin position="1"/>
        <end position="100"/>
    </location>
</feature>
<geneLocation type="chloroplast"/>
<dbReference type="EMBL" id="AJ271079">
    <property type="protein sequence ID" value="CAB67139.3"/>
    <property type="molecule type" value="Genomic_DNA"/>
</dbReference>
<dbReference type="RefSeq" id="NP_084674.2">
    <property type="nucleotide sequence ID" value="NC_002693.2"/>
</dbReference>
<dbReference type="SMR" id="Q9MTN6"/>
<dbReference type="GeneID" id="802798"/>
<dbReference type="GO" id="GO:0009507">
    <property type="term" value="C:chloroplast"/>
    <property type="evidence" value="ECO:0007669"/>
    <property type="project" value="UniProtKB-SubCell"/>
</dbReference>
<dbReference type="GO" id="GO:0015935">
    <property type="term" value="C:small ribosomal subunit"/>
    <property type="evidence" value="ECO:0007669"/>
    <property type="project" value="TreeGrafter"/>
</dbReference>
<dbReference type="GO" id="GO:0019843">
    <property type="term" value="F:rRNA binding"/>
    <property type="evidence" value="ECO:0007669"/>
    <property type="project" value="UniProtKB-UniRule"/>
</dbReference>
<dbReference type="GO" id="GO:0003735">
    <property type="term" value="F:structural constituent of ribosome"/>
    <property type="evidence" value="ECO:0007669"/>
    <property type="project" value="InterPro"/>
</dbReference>
<dbReference type="GO" id="GO:0006412">
    <property type="term" value="P:translation"/>
    <property type="evidence" value="ECO:0007669"/>
    <property type="project" value="UniProtKB-UniRule"/>
</dbReference>
<dbReference type="FunFam" id="1.10.287.1480:FF:000001">
    <property type="entry name" value="30S ribosomal protein S14"/>
    <property type="match status" value="1"/>
</dbReference>
<dbReference type="Gene3D" id="1.10.287.1480">
    <property type="match status" value="1"/>
</dbReference>
<dbReference type="HAMAP" id="MF_00537">
    <property type="entry name" value="Ribosomal_uS14_1"/>
    <property type="match status" value="1"/>
</dbReference>
<dbReference type="InterPro" id="IPR001209">
    <property type="entry name" value="Ribosomal_uS14"/>
</dbReference>
<dbReference type="InterPro" id="IPR023036">
    <property type="entry name" value="Ribosomal_uS14_bac/plastid"/>
</dbReference>
<dbReference type="InterPro" id="IPR018271">
    <property type="entry name" value="Ribosomal_uS14_CS"/>
</dbReference>
<dbReference type="NCBIfam" id="NF006477">
    <property type="entry name" value="PRK08881.1"/>
    <property type="match status" value="1"/>
</dbReference>
<dbReference type="PANTHER" id="PTHR19836">
    <property type="entry name" value="30S RIBOSOMAL PROTEIN S14"/>
    <property type="match status" value="1"/>
</dbReference>
<dbReference type="PANTHER" id="PTHR19836:SF19">
    <property type="entry name" value="SMALL RIBOSOMAL SUBUNIT PROTEIN US14M"/>
    <property type="match status" value="1"/>
</dbReference>
<dbReference type="Pfam" id="PF00253">
    <property type="entry name" value="Ribosomal_S14"/>
    <property type="match status" value="1"/>
</dbReference>
<dbReference type="SUPFAM" id="SSF57716">
    <property type="entry name" value="Glucocorticoid receptor-like (DNA-binding domain)"/>
    <property type="match status" value="1"/>
</dbReference>
<dbReference type="PROSITE" id="PS00527">
    <property type="entry name" value="RIBOSOMAL_S14"/>
    <property type="match status" value="1"/>
</dbReference>
<gene>
    <name evidence="1" type="primary">rps14</name>
</gene>
<comment type="function">
    <text evidence="1">Binds 16S rRNA, required for the assembly of 30S particles.</text>
</comment>
<comment type="subunit">
    <text evidence="1">Part of the 30S ribosomal subunit.</text>
</comment>
<comment type="subcellular location">
    <subcellularLocation>
        <location>Plastid</location>
        <location>Chloroplast</location>
    </subcellularLocation>
</comment>
<comment type="similarity">
    <text evidence="1">Belongs to the universal ribosomal protein uS14 family.</text>
</comment>
<protein>
    <recommendedName>
        <fullName evidence="1">Small ribosomal subunit protein uS14c</fullName>
    </recommendedName>
    <alternativeName>
        <fullName evidence="2">30S ribosomal protein S14, chloroplastic</fullName>
    </alternativeName>
</protein>
<sequence length="100" mass="11755">MARKGLIQREKKREKLEQKYRLIRRSSKKEISTAPSLSEKWKIHGKLQSSPRNSAPTRLHRRCFSTGRPRANYRDFRLSGHILREMVHACLLPGATRSSW</sequence>